<feature type="chain" id="PRO_1000189754" description="D-alanine--D-alanine ligase">
    <location>
        <begin position="1"/>
        <end position="331"/>
    </location>
</feature>
<feature type="domain" description="ATP-grasp" evidence="2">
    <location>
        <begin position="121"/>
        <end position="327"/>
    </location>
</feature>
<feature type="binding site" evidence="2">
    <location>
        <begin position="151"/>
        <end position="206"/>
    </location>
    <ligand>
        <name>ATP</name>
        <dbReference type="ChEBI" id="CHEBI:30616"/>
    </ligand>
</feature>
<feature type="binding site" evidence="2">
    <location>
        <position position="281"/>
    </location>
    <ligand>
        <name>Mg(2+)</name>
        <dbReference type="ChEBI" id="CHEBI:18420"/>
        <label>1</label>
    </ligand>
</feature>
<feature type="binding site" evidence="2">
    <location>
        <position position="294"/>
    </location>
    <ligand>
        <name>Mg(2+)</name>
        <dbReference type="ChEBI" id="CHEBI:18420"/>
        <label>1</label>
    </ligand>
</feature>
<feature type="binding site" evidence="2">
    <location>
        <position position="294"/>
    </location>
    <ligand>
        <name>Mg(2+)</name>
        <dbReference type="ChEBI" id="CHEBI:18420"/>
        <label>2</label>
    </ligand>
</feature>
<feature type="binding site" evidence="2">
    <location>
        <position position="296"/>
    </location>
    <ligand>
        <name>Mg(2+)</name>
        <dbReference type="ChEBI" id="CHEBI:18420"/>
        <label>2</label>
    </ligand>
</feature>
<accession>B7VRZ7</accession>
<name>DDL_VIBA3</name>
<organism>
    <name type="scientific">Vibrio atlanticus (strain LGP32)</name>
    <name type="common">Vibrio splendidus (strain Mel32)</name>
    <dbReference type="NCBI Taxonomy" id="575788"/>
    <lineage>
        <taxon>Bacteria</taxon>
        <taxon>Pseudomonadati</taxon>
        <taxon>Pseudomonadota</taxon>
        <taxon>Gammaproteobacteria</taxon>
        <taxon>Vibrionales</taxon>
        <taxon>Vibrionaceae</taxon>
        <taxon>Vibrio</taxon>
    </lineage>
</organism>
<evidence type="ECO:0000250" key="1"/>
<evidence type="ECO:0000255" key="2">
    <source>
        <dbReference type="HAMAP-Rule" id="MF_00047"/>
    </source>
</evidence>
<comment type="function">
    <text evidence="2">Cell wall formation.</text>
</comment>
<comment type="catalytic activity">
    <reaction evidence="2">
        <text>2 D-alanine + ATP = D-alanyl-D-alanine + ADP + phosphate + H(+)</text>
        <dbReference type="Rhea" id="RHEA:11224"/>
        <dbReference type="ChEBI" id="CHEBI:15378"/>
        <dbReference type="ChEBI" id="CHEBI:30616"/>
        <dbReference type="ChEBI" id="CHEBI:43474"/>
        <dbReference type="ChEBI" id="CHEBI:57416"/>
        <dbReference type="ChEBI" id="CHEBI:57822"/>
        <dbReference type="ChEBI" id="CHEBI:456216"/>
        <dbReference type="EC" id="6.3.2.4"/>
    </reaction>
</comment>
<comment type="cofactor">
    <cofactor evidence="1">
        <name>Mg(2+)</name>
        <dbReference type="ChEBI" id="CHEBI:18420"/>
    </cofactor>
    <cofactor evidence="1">
        <name>Mn(2+)</name>
        <dbReference type="ChEBI" id="CHEBI:29035"/>
    </cofactor>
    <text evidence="1">Binds 2 magnesium or manganese ions per subunit.</text>
</comment>
<comment type="pathway">
    <text evidence="2">Cell wall biogenesis; peptidoglycan biosynthesis.</text>
</comment>
<comment type="subcellular location">
    <subcellularLocation>
        <location evidence="2">Cytoplasm</location>
    </subcellularLocation>
</comment>
<comment type="similarity">
    <text evidence="2">Belongs to the D-alanine--D-alanine ligase family.</text>
</comment>
<protein>
    <recommendedName>
        <fullName evidence="2">D-alanine--D-alanine ligase</fullName>
        <ecNumber evidence="2">6.3.2.4</ecNumber>
    </recommendedName>
    <alternativeName>
        <fullName evidence="2">D-Ala-D-Ala ligase</fullName>
    </alternativeName>
    <alternativeName>
        <fullName evidence="2">D-alanylalanine synthetase</fullName>
    </alternativeName>
</protein>
<proteinExistence type="inferred from homology"/>
<dbReference type="EC" id="6.3.2.4" evidence="2"/>
<dbReference type="EMBL" id="FM954973">
    <property type="protein sequence ID" value="CAV26458.1"/>
    <property type="molecule type" value="Genomic_DNA"/>
</dbReference>
<dbReference type="SMR" id="B7VRZ7"/>
<dbReference type="STRING" id="575788.VS_II0746"/>
<dbReference type="KEGG" id="vsp:VS_II0746"/>
<dbReference type="PATRIC" id="fig|575788.5.peg.704"/>
<dbReference type="eggNOG" id="COG1181">
    <property type="taxonomic scope" value="Bacteria"/>
</dbReference>
<dbReference type="HOGENOM" id="CLU_039268_0_0_6"/>
<dbReference type="UniPathway" id="UPA00219"/>
<dbReference type="Proteomes" id="UP000009100">
    <property type="component" value="Chromosome 2"/>
</dbReference>
<dbReference type="GO" id="GO:0005829">
    <property type="term" value="C:cytosol"/>
    <property type="evidence" value="ECO:0007669"/>
    <property type="project" value="TreeGrafter"/>
</dbReference>
<dbReference type="GO" id="GO:0005524">
    <property type="term" value="F:ATP binding"/>
    <property type="evidence" value="ECO:0007669"/>
    <property type="project" value="UniProtKB-KW"/>
</dbReference>
<dbReference type="GO" id="GO:0008716">
    <property type="term" value="F:D-alanine-D-alanine ligase activity"/>
    <property type="evidence" value="ECO:0007669"/>
    <property type="project" value="UniProtKB-UniRule"/>
</dbReference>
<dbReference type="GO" id="GO:0046872">
    <property type="term" value="F:metal ion binding"/>
    <property type="evidence" value="ECO:0007669"/>
    <property type="project" value="UniProtKB-KW"/>
</dbReference>
<dbReference type="GO" id="GO:0071555">
    <property type="term" value="P:cell wall organization"/>
    <property type="evidence" value="ECO:0007669"/>
    <property type="project" value="UniProtKB-KW"/>
</dbReference>
<dbReference type="GO" id="GO:0009252">
    <property type="term" value="P:peptidoglycan biosynthetic process"/>
    <property type="evidence" value="ECO:0007669"/>
    <property type="project" value="UniProtKB-UniRule"/>
</dbReference>
<dbReference type="GO" id="GO:0008360">
    <property type="term" value="P:regulation of cell shape"/>
    <property type="evidence" value="ECO:0007669"/>
    <property type="project" value="UniProtKB-KW"/>
</dbReference>
<dbReference type="Gene3D" id="3.40.50.20">
    <property type="match status" value="1"/>
</dbReference>
<dbReference type="Gene3D" id="3.30.1490.20">
    <property type="entry name" value="ATP-grasp fold, A domain"/>
    <property type="match status" value="1"/>
</dbReference>
<dbReference type="Gene3D" id="3.30.470.20">
    <property type="entry name" value="ATP-grasp fold, B domain"/>
    <property type="match status" value="1"/>
</dbReference>
<dbReference type="HAMAP" id="MF_00047">
    <property type="entry name" value="Dala_Dala_lig"/>
    <property type="match status" value="1"/>
</dbReference>
<dbReference type="InterPro" id="IPR011761">
    <property type="entry name" value="ATP-grasp"/>
</dbReference>
<dbReference type="InterPro" id="IPR013815">
    <property type="entry name" value="ATP_grasp_subdomain_1"/>
</dbReference>
<dbReference type="InterPro" id="IPR000291">
    <property type="entry name" value="D-Ala_lig_Van_CS"/>
</dbReference>
<dbReference type="InterPro" id="IPR005905">
    <property type="entry name" value="D_ala_D_ala"/>
</dbReference>
<dbReference type="InterPro" id="IPR011095">
    <property type="entry name" value="Dala_Dala_lig_C"/>
</dbReference>
<dbReference type="InterPro" id="IPR011127">
    <property type="entry name" value="Dala_Dala_lig_N"/>
</dbReference>
<dbReference type="InterPro" id="IPR016185">
    <property type="entry name" value="PreATP-grasp_dom_sf"/>
</dbReference>
<dbReference type="NCBIfam" id="TIGR01205">
    <property type="entry name" value="D_ala_D_alaTIGR"/>
    <property type="match status" value="1"/>
</dbReference>
<dbReference type="NCBIfam" id="NF002527">
    <property type="entry name" value="PRK01966.1-3"/>
    <property type="match status" value="1"/>
</dbReference>
<dbReference type="NCBIfam" id="NF002528">
    <property type="entry name" value="PRK01966.1-4"/>
    <property type="match status" value="1"/>
</dbReference>
<dbReference type="PANTHER" id="PTHR23132">
    <property type="entry name" value="D-ALANINE--D-ALANINE LIGASE"/>
    <property type="match status" value="1"/>
</dbReference>
<dbReference type="PANTHER" id="PTHR23132:SF25">
    <property type="entry name" value="D-ALANINE--D-ALANINE LIGASE A"/>
    <property type="match status" value="1"/>
</dbReference>
<dbReference type="Pfam" id="PF07478">
    <property type="entry name" value="Dala_Dala_lig_C"/>
    <property type="match status" value="1"/>
</dbReference>
<dbReference type="Pfam" id="PF01820">
    <property type="entry name" value="Dala_Dala_lig_N"/>
    <property type="match status" value="1"/>
</dbReference>
<dbReference type="PIRSF" id="PIRSF039102">
    <property type="entry name" value="Ddl/VanB"/>
    <property type="match status" value="1"/>
</dbReference>
<dbReference type="SUPFAM" id="SSF56059">
    <property type="entry name" value="Glutathione synthetase ATP-binding domain-like"/>
    <property type="match status" value="1"/>
</dbReference>
<dbReference type="SUPFAM" id="SSF52440">
    <property type="entry name" value="PreATP-grasp domain"/>
    <property type="match status" value="1"/>
</dbReference>
<dbReference type="PROSITE" id="PS50975">
    <property type="entry name" value="ATP_GRASP"/>
    <property type="match status" value="1"/>
</dbReference>
<dbReference type="PROSITE" id="PS00843">
    <property type="entry name" value="DALA_DALA_LIGASE_1"/>
    <property type="match status" value="1"/>
</dbReference>
<dbReference type="PROSITE" id="PS00844">
    <property type="entry name" value="DALA_DALA_LIGASE_2"/>
    <property type="match status" value="1"/>
</dbReference>
<keyword id="KW-0067">ATP-binding</keyword>
<keyword id="KW-0133">Cell shape</keyword>
<keyword id="KW-0961">Cell wall biogenesis/degradation</keyword>
<keyword id="KW-0963">Cytoplasm</keyword>
<keyword id="KW-0436">Ligase</keyword>
<keyword id="KW-0460">Magnesium</keyword>
<keyword id="KW-0464">Manganese</keyword>
<keyword id="KW-0479">Metal-binding</keyword>
<keyword id="KW-0547">Nucleotide-binding</keyword>
<keyword id="KW-0573">Peptidoglycan synthesis</keyword>
<reference key="1">
    <citation type="submission" date="2009-02" db="EMBL/GenBank/DDBJ databases">
        <title>Vibrio splendidus str. LGP32 complete genome.</title>
        <authorList>
            <person name="Mazel D."/>
            <person name="Le Roux F."/>
        </authorList>
    </citation>
    <scope>NUCLEOTIDE SEQUENCE [LARGE SCALE GENOMIC DNA]</scope>
    <source>
        <strain>LGP32</strain>
    </source>
</reference>
<gene>
    <name evidence="2" type="primary">ddl</name>
    <name type="ordered locus">VS_II0746</name>
</gene>
<sequence length="331" mass="37013">MNTTNILLLCGGGSSEHEVSIVSANYLFEQLNSVTDFNVVRVEIKNEGWCLDSGELVYLDINDQTLRGDNLESKVDFIVPCIHGFPGETGDIQSLFEMAKIPYLGCGSEASNNSFNKITSKLWYDALGIPNTPYLFLSDNTEQAHAQATQAFESWGKVFVKAARQGSSVGCYQVNQVEELSEAINKAFTFSDQVLIEKSVVPRELEVAAYEIDGELQISKPGEVIAPNGAFYSYEEKYSADSHSITEVEATNLTDEQRELIADSARKVFTQMKLRHLSRIDFFLTQDNEIYLNEVNTFPGMTPISMFPKMVEHDGHKFSQFLENCVRTSIS</sequence>